<comment type="function">
    <text evidence="1">Required for the formation of a threonylcarbamoyl group on adenosine at position 37 (t(6)A37) in tRNAs that read codons beginning with adenine. Catalyzes the conversion of L-threonine, HCO(3)(-)/CO(2) and ATP to give threonylcarbamoyl-AMP (TC-AMP) as the acyladenylate intermediate, with the release of diphosphate.</text>
</comment>
<comment type="catalytic activity">
    <reaction evidence="1">
        <text>L-threonine + hydrogencarbonate + ATP = L-threonylcarbamoyladenylate + diphosphate + H2O</text>
        <dbReference type="Rhea" id="RHEA:36407"/>
        <dbReference type="ChEBI" id="CHEBI:15377"/>
        <dbReference type="ChEBI" id="CHEBI:17544"/>
        <dbReference type="ChEBI" id="CHEBI:30616"/>
        <dbReference type="ChEBI" id="CHEBI:33019"/>
        <dbReference type="ChEBI" id="CHEBI:57926"/>
        <dbReference type="ChEBI" id="CHEBI:73682"/>
        <dbReference type="EC" id="2.7.7.87"/>
    </reaction>
</comment>
<comment type="subcellular location">
    <subcellularLocation>
        <location evidence="1">Cytoplasm</location>
    </subcellularLocation>
</comment>
<comment type="similarity">
    <text evidence="1">Belongs to the SUA5 family. TsaC subfamily.</text>
</comment>
<comment type="sequence caution" evidence="2">
    <conflict type="erroneous initiation">
        <sequence resource="EMBL-CDS" id="ACB93270"/>
    </conflict>
</comment>
<gene>
    <name evidence="1" type="primary">tsaC</name>
    <name type="synonym">rimN</name>
    <name type="ordered locus">XfasM23_1870</name>
</gene>
<feature type="chain" id="PRO_0000353019" description="Threonylcarbamoyl-AMP synthase">
    <location>
        <begin position="1"/>
        <end position="187"/>
    </location>
</feature>
<feature type="domain" description="YrdC-like" evidence="1">
    <location>
        <begin position="4"/>
        <end position="187"/>
    </location>
</feature>
<accession>B2I8S9</accession>
<evidence type="ECO:0000255" key="1">
    <source>
        <dbReference type="HAMAP-Rule" id="MF_01852"/>
    </source>
</evidence>
<evidence type="ECO:0000305" key="2"/>
<keyword id="KW-0067">ATP-binding</keyword>
<keyword id="KW-0963">Cytoplasm</keyword>
<keyword id="KW-0547">Nucleotide-binding</keyword>
<keyword id="KW-0548">Nucleotidyltransferase</keyword>
<keyword id="KW-0808">Transferase</keyword>
<keyword id="KW-0819">tRNA processing</keyword>
<protein>
    <recommendedName>
        <fullName evidence="1">Threonylcarbamoyl-AMP synthase</fullName>
        <shortName evidence="1">TC-AMP synthase</shortName>
        <ecNumber evidence="1">2.7.7.87</ecNumber>
    </recommendedName>
    <alternativeName>
        <fullName evidence="1">L-threonylcarbamoyladenylate synthase</fullName>
    </alternativeName>
    <alternativeName>
        <fullName evidence="1">t(6)A37 threonylcarbamoyladenosine biosynthesis protein TsaC</fullName>
    </alternativeName>
    <alternativeName>
        <fullName evidence="1">tRNA threonylcarbamoyladenosine biosynthesis protein TsaC</fullName>
    </alternativeName>
</protein>
<name>TSAC_XYLF2</name>
<sequence>MATTLTLSEAVTALQQGDVIAYPTEAVWGLGCDPRQETAVHTLLNIKQRASGKGLILVTAELNTLQDWLDLDTLSPERLHEVQASWPGPHTWVLPASTRAPHWITGHHNGLAVRISAHPLVSALCRAWNMALISTSANVAGQPPARRREDLDPSLLPHLAGIVDGPTGGLAQPTSIRDARSGHILRL</sequence>
<reference key="1">
    <citation type="journal article" date="2010" name="J. Bacteriol.">
        <title>Whole genome sequences of two Xylella fastidiosa strains (M12 and M23) causing almond leaf scorch disease in California.</title>
        <authorList>
            <person name="Chen J."/>
            <person name="Xie G."/>
            <person name="Han S."/>
            <person name="Chertkov O."/>
            <person name="Sims D."/>
            <person name="Civerolo E.L."/>
        </authorList>
    </citation>
    <scope>NUCLEOTIDE SEQUENCE [LARGE SCALE GENOMIC DNA]</scope>
    <source>
        <strain>M23</strain>
    </source>
</reference>
<dbReference type="EC" id="2.7.7.87" evidence="1"/>
<dbReference type="EMBL" id="CP001011">
    <property type="protein sequence ID" value="ACB93270.1"/>
    <property type="status" value="ALT_INIT"/>
    <property type="molecule type" value="Genomic_DNA"/>
</dbReference>
<dbReference type="RefSeq" id="WP_011098240.1">
    <property type="nucleotide sequence ID" value="NC_010577.1"/>
</dbReference>
<dbReference type="SMR" id="B2I8S9"/>
<dbReference type="KEGG" id="xfn:XfasM23_1870"/>
<dbReference type="HOGENOM" id="CLU_031397_6_0_6"/>
<dbReference type="Proteomes" id="UP000001698">
    <property type="component" value="Chromosome"/>
</dbReference>
<dbReference type="GO" id="GO:0005737">
    <property type="term" value="C:cytoplasm"/>
    <property type="evidence" value="ECO:0007669"/>
    <property type="project" value="UniProtKB-SubCell"/>
</dbReference>
<dbReference type="GO" id="GO:0005524">
    <property type="term" value="F:ATP binding"/>
    <property type="evidence" value="ECO:0007669"/>
    <property type="project" value="UniProtKB-UniRule"/>
</dbReference>
<dbReference type="GO" id="GO:0003725">
    <property type="term" value="F:double-stranded RNA binding"/>
    <property type="evidence" value="ECO:0007669"/>
    <property type="project" value="InterPro"/>
</dbReference>
<dbReference type="GO" id="GO:0061710">
    <property type="term" value="F:L-threonylcarbamoyladenylate synthase"/>
    <property type="evidence" value="ECO:0007669"/>
    <property type="project" value="UniProtKB-EC"/>
</dbReference>
<dbReference type="GO" id="GO:0000049">
    <property type="term" value="F:tRNA binding"/>
    <property type="evidence" value="ECO:0007669"/>
    <property type="project" value="TreeGrafter"/>
</dbReference>
<dbReference type="GO" id="GO:0006450">
    <property type="term" value="P:regulation of translational fidelity"/>
    <property type="evidence" value="ECO:0007669"/>
    <property type="project" value="TreeGrafter"/>
</dbReference>
<dbReference type="GO" id="GO:0002949">
    <property type="term" value="P:tRNA threonylcarbamoyladenosine modification"/>
    <property type="evidence" value="ECO:0007669"/>
    <property type="project" value="UniProtKB-UniRule"/>
</dbReference>
<dbReference type="FunFam" id="3.90.870.10:FF:000004">
    <property type="entry name" value="Threonylcarbamoyl-AMP synthase"/>
    <property type="match status" value="1"/>
</dbReference>
<dbReference type="Gene3D" id="3.90.870.10">
    <property type="entry name" value="DHBP synthase"/>
    <property type="match status" value="1"/>
</dbReference>
<dbReference type="HAMAP" id="MF_01852">
    <property type="entry name" value="TsaC"/>
    <property type="match status" value="1"/>
</dbReference>
<dbReference type="InterPro" id="IPR017945">
    <property type="entry name" value="DHBP_synth_RibB-like_a/b_dom"/>
</dbReference>
<dbReference type="InterPro" id="IPR006070">
    <property type="entry name" value="Sua5-like_dom"/>
</dbReference>
<dbReference type="InterPro" id="IPR023535">
    <property type="entry name" value="TC-AMP_synthase"/>
</dbReference>
<dbReference type="InterPro" id="IPR050156">
    <property type="entry name" value="TC-AMP_synthase_SUA5"/>
</dbReference>
<dbReference type="PANTHER" id="PTHR17490">
    <property type="entry name" value="SUA5"/>
    <property type="match status" value="1"/>
</dbReference>
<dbReference type="PANTHER" id="PTHR17490:SF18">
    <property type="entry name" value="THREONYLCARBAMOYL-AMP SYNTHASE"/>
    <property type="match status" value="1"/>
</dbReference>
<dbReference type="Pfam" id="PF01300">
    <property type="entry name" value="Sua5_yciO_yrdC"/>
    <property type="match status" value="1"/>
</dbReference>
<dbReference type="SUPFAM" id="SSF55821">
    <property type="entry name" value="YrdC/RibB"/>
    <property type="match status" value="1"/>
</dbReference>
<dbReference type="PROSITE" id="PS51163">
    <property type="entry name" value="YRDC"/>
    <property type="match status" value="1"/>
</dbReference>
<proteinExistence type="inferred from homology"/>
<organism>
    <name type="scientific">Xylella fastidiosa (strain M23)</name>
    <dbReference type="NCBI Taxonomy" id="405441"/>
    <lineage>
        <taxon>Bacteria</taxon>
        <taxon>Pseudomonadati</taxon>
        <taxon>Pseudomonadota</taxon>
        <taxon>Gammaproteobacteria</taxon>
        <taxon>Lysobacterales</taxon>
        <taxon>Lysobacteraceae</taxon>
        <taxon>Xylella</taxon>
    </lineage>
</organism>